<comment type="function">
    <text evidence="1">Required for the assembly of the V0 complex of the vacuolar ATPase (V-ATPase) in the endoplasmic reticulum.</text>
</comment>
<comment type="subcellular location">
    <subcellularLocation>
        <location evidence="1">Endoplasmic reticulum membrane</location>
        <topology evidence="1">Multi-pass membrane protein</topology>
    </subcellularLocation>
    <subcellularLocation>
        <location evidence="1">Endoplasmic reticulum-Golgi intermediate compartment membrane</location>
        <topology evidence="1">Multi-pass membrane protein</topology>
    </subcellularLocation>
    <subcellularLocation>
        <location evidence="1">Cytoplasmic vesicle</location>
        <location evidence="1">COPII-coated vesicle membrane</location>
        <topology evidence="1">Multi-pass membrane protein</topology>
    </subcellularLocation>
</comment>
<comment type="similarity">
    <text evidence="1">Belongs to the VMA21 family.</text>
</comment>
<sequence length="77" mass="8353">MAVDVPTSVIVKLMFFTLAMVSFPVLTFFVSQQYTSNTLVNGGLAALAANVVLFAYVIMAFSEDVPQSDGKESKKQQ</sequence>
<proteinExistence type="inferred from homology"/>
<evidence type="ECO:0000255" key="1">
    <source>
        <dbReference type="HAMAP-Rule" id="MF_03058"/>
    </source>
</evidence>
<dbReference type="EMBL" id="AE016814">
    <property type="protein sequence ID" value="AAS50461.1"/>
    <property type="molecule type" value="Genomic_DNA"/>
</dbReference>
<dbReference type="RefSeq" id="NP_982637.1">
    <property type="nucleotide sequence ID" value="NM_207990.1"/>
</dbReference>
<dbReference type="SMR" id="Q75EI3"/>
<dbReference type="FunCoup" id="Q75EI3">
    <property type="interactions" value="66"/>
</dbReference>
<dbReference type="STRING" id="284811.Q75EI3"/>
<dbReference type="EnsemblFungi" id="AAS50461">
    <property type="protein sequence ID" value="AAS50461"/>
    <property type="gene ID" value="AGOS_AAR096W"/>
</dbReference>
<dbReference type="GeneID" id="4618561"/>
<dbReference type="KEGG" id="ago:AGOS_AAR096W"/>
<dbReference type="eggNOG" id="ENOG502SBNA">
    <property type="taxonomic scope" value="Eukaryota"/>
</dbReference>
<dbReference type="HOGENOM" id="CLU_154717_1_0_1"/>
<dbReference type="InParanoid" id="Q75EI3"/>
<dbReference type="OMA" id="VMAFMED"/>
<dbReference type="OrthoDB" id="160405at2759"/>
<dbReference type="Proteomes" id="UP000000591">
    <property type="component" value="Chromosome I"/>
</dbReference>
<dbReference type="GO" id="GO:0005789">
    <property type="term" value="C:endoplasmic reticulum membrane"/>
    <property type="evidence" value="ECO:0000318"/>
    <property type="project" value="GO_Central"/>
</dbReference>
<dbReference type="GO" id="GO:0033116">
    <property type="term" value="C:endoplasmic reticulum-Golgi intermediate compartment membrane"/>
    <property type="evidence" value="ECO:0007669"/>
    <property type="project" value="UniProtKB-SubCell"/>
</dbReference>
<dbReference type="GO" id="GO:0012507">
    <property type="term" value="C:ER to Golgi transport vesicle membrane"/>
    <property type="evidence" value="ECO:0007669"/>
    <property type="project" value="UniProtKB-SubCell"/>
</dbReference>
<dbReference type="GO" id="GO:0070072">
    <property type="term" value="P:vacuolar proton-transporting V-type ATPase complex assembly"/>
    <property type="evidence" value="ECO:0000318"/>
    <property type="project" value="GO_Central"/>
</dbReference>
<dbReference type="HAMAP" id="MF_03058">
    <property type="entry name" value="VMA21"/>
    <property type="match status" value="1"/>
</dbReference>
<dbReference type="InterPro" id="IPR019013">
    <property type="entry name" value="Vma21"/>
</dbReference>
<dbReference type="Pfam" id="PF09446">
    <property type="entry name" value="VMA21"/>
    <property type="match status" value="1"/>
</dbReference>
<reference key="1">
    <citation type="journal article" date="2004" name="Science">
        <title>The Ashbya gossypii genome as a tool for mapping the ancient Saccharomyces cerevisiae genome.</title>
        <authorList>
            <person name="Dietrich F.S."/>
            <person name="Voegeli S."/>
            <person name="Brachat S."/>
            <person name="Lerch A."/>
            <person name="Gates K."/>
            <person name="Steiner S."/>
            <person name="Mohr C."/>
            <person name="Poehlmann R."/>
            <person name="Luedi P."/>
            <person name="Choi S."/>
            <person name="Wing R.A."/>
            <person name="Flavier A."/>
            <person name="Gaffney T.D."/>
            <person name="Philippsen P."/>
        </authorList>
    </citation>
    <scope>NUCLEOTIDE SEQUENCE [LARGE SCALE GENOMIC DNA]</scope>
    <source>
        <strain>ATCC 10895 / CBS 109.51 / FGSC 9923 / NRRL Y-1056</strain>
    </source>
</reference>
<reference key="2">
    <citation type="journal article" date="2013" name="G3 (Bethesda)">
        <title>Genomes of Ashbya fungi isolated from insects reveal four mating-type loci, numerous translocations, lack of transposons, and distinct gene duplications.</title>
        <authorList>
            <person name="Dietrich F.S."/>
            <person name="Voegeli S."/>
            <person name="Kuo S."/>
            <person name="Philippsen P."/>
        </authorList>
    </citation>
    <scope>GENOME REANNOTATION</scope>
    <source>
        <strain>ATCC 10895 / CBS 109.51 / FGSC 9923 / NRRL Y-1056</strain>
    </source>
</reference>
<protein>
    <recommendedName>
        <fullName evidence="1">Vacuolar ATPase assembly integral membrane protein VMA21</fullName>
    </recommendedName>
</protein>
<accession>Q75EI3</accession>
<organism>
    <name type="scientific">Eremothecium gossypii (strain ATCC 10895 / CBS 109.51 / FGSC 9923 / NRRL Y-1056)</name>
    <name type="common">Yeast</name>
    <name type="synonym">Ashbya gossypii</name>
    <dbReference type="NCBI Taxonomy" id="284811"/>
    <lineage>
        <taxon>Eukaryota</taxon>
        <taxon>Fungi</taxon>
        <taxon>Dikarya</taxon>
        <taxon>Ascomycota</taxon>
        <taxon>Saccharomycotina</taxon>
        <taxon>Saccharomycetes</taxon>
        <taxon>Saccharomycetales</taxon>
        <taxon>Saccharomycetaceae</taxon>
        <taxon>Eremothecium</taxon>
    </lineage>
</organism>
<name>VMA21_EREGS</name>
<gene>
    <name evidence="1" type="primary">VMA21</name>
    <name type="ordered locus">AAR096W</name>
</gene>
<keyword id="KW-0968">Cytoplasmic vesicle</keyword>
<keyword id="KW-0256">Endoplasmic reticulum</keyword>
<keyword id="KW-0472">Membrane</keyword>
<keyword id="KW-1185">Reference proteome</keyword>
<keyword id="KW-0812">Transmembrane</keyword>
<keyword id="KW-1133">Transmembrane helix</keyword>
<feature type="chain" id="PRO_0000377578" description="Vacuolar ATPase assembly integral membrane protein VMA21">
    <location>
        <begin position="1"/>
        <end position="77"/>
    </location>
</feature>
<feature type="topological domain" description="Cytoplasmic" evidence="1">
    <location>
        <begin position="1"/>
        <end position="8"/>
    </location>
</feature>
<feature type="transmembrane region" description="Helical" evidence="1">
    <location>
        <begin position="9"/>
        <end position="29"/>
    </location>
</feature>
<feature type="topological domain" description="Lumenal" evidence="1">
    <location>
        <begin position="30"/>
        <end position="41"/>
    </location>
</feature>
<feature type="transmembrane region" description="Helical" evidence="1">
    <location>
        <begin position="42"/>
        <end position="62"/>
    </location>
</feature>
<feature type="topological domain" description="Cytoplasmic" evidence="1">
    <location>
        <begin position="63"/>
        <end position="77"/>
    </location>
</feature>
<feature type="short sequence motif" description="Prevents secretion from ER">
    <location>
        <begin position="74"/>
        <end position="77"/>
    </location>
</feature>